<proteinExistence type="inferred from homology"/>
<protein>
    <recommendedName>
        <fullName evidence="1">Ribosomal RNA small subunit methyltransferase H</fullName>
        <ecNumber evidence="1">2.1.1.199</ecNumber>
    </recommendedName>
    <alternativeName>
        <fullName evidence="1">16S rRNA m(4)C1402 methyltransferase</fullName>
    </alternativeName>
    <alternativeName>
        <fullName evidence="1">rRNA (cytosine-N(4)-)-methyltransferase RsmH</fullName>
    </alternativeName>
</protein>
<keyword id="KW-0963">Cytoplasm</keyword>
<keyword id="KW-0489">Methyltransferase</keyword>
<keyword id="KW-0698">rRNA processing</keyword>
<keyword id="KW-0949">S-adenosyl-L-methionine</keyword>
<keyword id="KW-0808">Transferase</keyword>
<gene>
    <name evidence="1" type="primary">rsmH</name>
    <name type="synonym">mraW</name>
    <name type="ordered locus">ECED1_0083</name>
</gene>
<organism>
    <name type="scientific">Escherichia coli O81 (strain ED1a)</name>
    <dbReference type="NCBI Taxonomy" id="585397"/>
    <lineage>
        <taxon>Bacteria</taxon>
        <taxon>Pseudomonadati</taxon>
        <taxon>Pseudomonadota</taxon>
        <taxon>Gammaproteobacteria</taxon>
        <taxon>Enterobacterales</taxon>
        <taxon>Enterobacteriaceae</taxon>
        <taxon>Escherichia</taxon>
    </lineage>
</organism>
<evidence type="ECO:0000255" key="1">
    <source>
        <dbReference type="HAMAP-Rule" id="MF_01007"/>
    </source>
</evidence>
<reference key="1">
    <citation type="journal article" date="2009" name="PLoS Genet.">
        <title>Organised genome dynamics in the Escherichia coli species results in highly diverse adaptive paths.</title>
        <authorList>
            <person name="Touchon M."/>
            <person name="Hoede C."/>
            <person name="Tenaillon O."/>
            <person name="Barbe V."/>
            <person name="Baeriswyl S."/>
            <person name="Bidet P."/>
            <person name="Bingen E."/>
            <person name="Bonacorsi S."/>
            <person name="Bouchier C."/>
            <person name="Bouvet O."/>
            <person name="Calteau A."/>
            <person name="Chiapello H."/>
            <person name="Clermont O."/>
            <person name="Cruveiller S."/>
            <person name="Danchin A."/>
            <person name="Diard M."/>
            <person name="Dossat C."/>
            <person name="Karoui M.E."/>
            <person name="Frapy E."/>
            <person name="Garry L."/>
            <person name="Ghigo J.M."/>
            <person name="Gilles A.M."/>
            <person name="Johnson J."/>
            <person name="Le Bouguenec C."/>
            <person name="Lescat M."/>
            <person name="Mangenot S."/>
            <person name="Martinez-Jehanne V."/>
            <person name="Matic I."/>
            <person name="Nassif X."/>
            <person name="Oztas S."/>
            <person name="Petit M.A."/>
            <person name="Pichon C."/>
            <person name="Rouy Z."/>
            <person name="Ruf C.S."/>
            <person name="Schneider D."/>
            <person name="Tourret J."/>
            <person name="Vacherie B."/>
            <person name="Vallenet D."/>
            <person name="Medigue C."/>
            <person name="Rocha E.P.C."/>
            <person name="Denamur E."/>
        </authorList>
    </citation>
    <scope>NUCLEOTIDE SEQUENCE [LARGE SCALE GENOMIC DNA]</scope>
    <source>
        <strain>ED1a</strain>
    </source>
</reference>
<dbReference type="EC" id="2.1.1.199" evidence="1"/>
<dbReference type="EMBL" id="CU928162">
    <property type="protein sequence ID" value="CAR06306.1"/>
    <property type="molecule type" value="Genomic_DNA"/>
</dbReference>
<dbReference type="RefSeq" id="WP_000970498.1">
    <property type="nucleotide sequence ID" value="NC_011745.1"/>
</dbReference>
<dbReference type="SMR" id="B7MNU1"/>
<dbReference type="KEGG" id="ecq:ECED1_0083"/>
<dbReference type="HOGENOM" id="CLU_038422_2_0_6"/>
<dbReference type="Proteomes" id="UP000000748">
    <property type="component" value="Chromosome"/>
</dbReference>
<dbReference type="GO" id="GO:0005737">
    <property type="term" value="C:cytoplasm"/>
    <property type="evidence" value="ECO:0007669"/>
    <property type="project" value="UniProtKB-SubCell"/>
</dbReference>
<dbReference type="GO" id="GO:0071424">
    <property type="term" value="F:rRNA (cytosine-N4-)-methyltransferase activity"/>
    <property type="evidence" value="ECO:0007669"/>
    <property type="project" value="UniProtKB-UniRule"/>
</dbReference>
<dbReference type="GO" id="GO:0070475">
    <property type="term" value="P:rRNA base methylation"/>
    <property type="evidence" value="ECO:0007669"/>
    <property type="project" value="UniProtKB-UniRule"/>
</dbReference>
<dbReference type="FunFam" id="1.10.150.170:FF:000001">
    <property type="entry name" value="Ribosomal RNA small subunit methyltransferase H"/>
    <property type="match status" value="1"/>
</dbReference>
<dbReference type="Gene3D" id="1.10.150.170">
    <property type="entry name" value="Putative methyltransferase TM0872, insert domain"/>
    <property type="match status" value="1"/>
</dbReference>
<dbReference type="Gene3D" id="3.40.50.150">
    <property type="entry name" value="Vaccinia Virus protein VP39"/>
    <property type="match status" value="1"/>
</dbReference>
<dbReference type="HAMAP" id="MF_01007">
    <property type="entry name" value="16SrRNA_methyltr_H"/>
    <property type="match status" value="1"/>
</dbReference>
<dbReference type="InterPro" id="IPR002903">
    <property type="entry name" value="RsmH"/>
</dbReference>
<dbReference type="InterPro" id="IPR023397">
    <property type="entry name" value="SAM-dep_MeTrfase_MraW_recog"/>
</dbReference>
<dbReference type="InterPro" id="IPR029063">
    <property type="entry name" value="SAM-dependent_MTases_sf"/>
</dbReference>
<dbReference type="NCBIfam" id="TIGR00006">
    <property type="entry name" value="16S rRNA (cytosine(1402)-N(4))-methyltransferase RsmH"/>
    <property type="match status" value="1"/>
</dbReference>
<dbReference type="PANTHER" id="PTHR11265:SF0">
    <property type="entry name" value="12S RRNA N4-METHYLCYTIDINE METHYLTRANSFERASE"/>
    <property type="match status" value="1"/>
</dbReference>
<dbReference type="PANTHER" id="PTHR11265">
    <property type="entry name" value="S-ADENOSYL-METHYLTRANSFERASE MRAW"/>
    <property type="match status" value="1"/>
</dbReference>
<dbReference type="Pfam" id="PF01795">
    <property type="entry name" value="Methyltransf_5"/>
    <property type="match status" value="1"/>
</dbReference>
<dbReference type="PIRSF" id="PIRSF004486">
    <property type="entry name" value="MraW"/>
    <property type="match status" value="1"/>
</dbReference>
<dbReference type="SUPFAM" id="SSF81799">
    <property type="entry name" value="Putative methyltransferase TM0872, insert domain"/>
    <property type="match status" value="1"/>
</dbReference>
<dbReference type="SUPFAM" id="SSF53335">
    <property type="entry name" value="S-adenosyl-L-methionine-dependent methyltransferases"/>
    <property type="match status" value="1"/>
</dbReference>
<feature type="chain" id="PRO_0000386885" description="Ribosomal RNA small subunit methyltransferase H">
    <location>
        <begin position="1"/>
        <end position="313"/>
    </location>
</feature>
<feature type="binding site" evidence="1">
    <location>
        <begin position="35"/>
        <end position="37"/>
    </location>
    <ligand>
        <name>S-adenosyl-L-methionine</name>
        <dbReference type="ChEBI" id="CHEBI:59789"/>
    </ligand>
</feature>
<feature type="binding site" evidence="1">
    <location>
        <position position="55"/>
    </location>
    <ligand>
        <name>S-adenosyl-L-methionine</name>
        <dbReference type="ChEBI" id="CHEBI:59789"/>
    </ligand>
</feature>
<feature type="binding site" evidence="1">
    <location>
        <position position="79"/>
    </location>
    <ligand>
        <name>S-adenosyl-L-methionine</name>
        <dbReference type="ChEBI" id="CHEBI:59789"/>
    </ligand>
</feature>
<feature type="binding site" evidence="1">
    <location>
        <position position="101"/>
    </location>
    <ligand>
        <name>S-adenosyl-L-methionine</name>
        <dbReference type="ChEBI" id="CHEBI:59789"/>
    </ligand>
</feature>
<feature type="binding site" evidence="1">
    <location>
        <position position="108"/>
    </location>
    <ligand>
        <name>S-adenosyl-L-methionine</name>
        <dbReference type="ChEBI" id="CHEBI:59789"/>
    </ligand>
</feature>
<name>RSMH_ECO81</name>
<sequence length="313" mass="34866">MMENYKHTTVLLDEAVNGLNIRPDGTYIDGTFGRGGHSRLILSQLGEEGRLLAIDRDPQAIAVAKTIDDPRFSIIHGPFSALGEYVAERDLIGKIDGILLDLGVSSPQLDDAERGFSFMRDGPLDMRMDPTRGQSAAEWLQTAEEADIAWVLKTYGEERFAKRIARAIVERNREQPMTRTKELAEVVAAATPVKDKFKHPATRTFQAVRIWVNSELEEIEQALKSSLNVLAPGGRLSIISFHSLEDRIVKRFMRENSRGPQVPAGLPMTEEQLKKLGGRQLRALGKLMPGEEEVAENPRARSSVLRIAERTNA</sequence>
<comment type="function">
    <text evidence="1">Specifically methylates the N4 position of cytidine in position 1402 (C1402) of 16S rRNA.</text>
</comment>
<comment type="catalytic activity">
    <reaction evidence="1">
        <text>cytidine(1402) in 16S rRNA + S-adenosyl-L-methionine = N(4)-methylcytidine(1402) in 16S rRNA + S-adenosyl-L-homocysteine + H(+)</text>
        <dbReference type="Rhea" id="RHEA:42928"/>
        <dbReference type="Rhea" id="RHEA-COMP:10286"/>
        <dbReference type="Rhea" id="RHEA-COMP:10287"/>
        <dbReference type="ChEBI" id="CHEBI:15378"/>
        <dbReference type="ChEBI" id="CHEBI:57856"/>
        <dbReference type="ChEBI" id="CHEBI:59789"/>
        <dbReference type="ChEBI" id="CHEBI:74506"/>
        <dbReference type="ChEBI" id="CHEBI:82748"/>
        <dbReference type="EC" id="2.1.1.199"/>
    </reaction>
</comment>
<comment type="subcellular location">
    <subcellularLocation>
        <location evidence="1">Cytoplasm</location>
    </subcellularLocation>
</comment>
<comment type="similarity">
    <text evidence="1">Belongs to the methyltransferase superfamily. RsmH family.</text>
</comment>
<accession>B7MNU1</accession>